<gene>
    <name type="primary">tmco1</name>
    <name type="ORF">DDB_G0281489</name>
</gene>
<evidence type="ECO:0000250" key="1">
    <source>
        <dbReference type="UniProtKB" id="A0A8I3PI99"/>
    </source>
</evidence>
<evidence type="ECO:0000250" key="2">
    <source>
        <dbReference type="UniProtKB" id="Q9UM00"/>
    </source>
</evidence>
<evidence type="ECO:0000255" key="3"/>
<evidence type="ECO:0000305" key="4"/>
<organism>
    <name type="scientific">Dictyostelium discoideum</name>
    <name type="common">Social amoeba</name>
    <dbReference type="NCBI Taxonomy" id="44689"/>
    <lineage>
        <taxon>Eukaryota</taxon>
        <taxon>Amoebozoa</taxon>
        <taxon>Evosea</taxon>
        <taxon>Eumycetozoa</taxon>
        <taxon>Dictyostelia</taxon>
        <taxon>Dictyosteliales</taxon>
        <taxon>Dictyosteliaceae</taxon>
        <taxon>Dictyostelium</taxon>
    </lineage>
</organism>
<name>TMCO1_DICDI</name>
<feature type="chain" id="PRO_0000331204" description="Calcium load-activated calcium channel homolog">
    <location>
        <begin position="1"/>
        <end position="186"/>
    </location>
</feature>
<feature type="topological domain" description="Lumenal" evidence="4">
    <location>
        <begin position="1"/>
        <end position="2"/>
    </location>
</feature>
<feature type="transmembrane region" description="Helical" evidence="1">
    <location>
        <begin position="3"/>
        <end position="30"/>
    </location>
</feature>
<feature type="topological domain" description="Cytoplasmic" evidence="4">
    <location>
        <begin position="31"/>
        <end position="88"/>
    </location>
</feature>
<feature type="transmembrane region" description="Helical" evidence="1">
    <location>
        <begin position="89"/>
        <end position="108"/>
    </location>
</feature>
<feature type="topological domain" description="Lumenal" evidence="4">
    <location>
        <begin position="109"/>
        <end position="122"/>
    </location>
</feature>
<feature type="intramembrane region" evidence="1">
    <location>
        <begin position="123"/>
        <end position="132"/>
    </location>
</feature>
<feature type="topological domain" description="Lumenal" evidence="4">
    <location>
        <begin position="133"/>
        <end position="142"/>
    </location>
</feature>
<feature type="transmembrane region" description="Helical" evidence="1">
    <location>
        <begin position="143"/>
        <end position="164"/>
    </location>
</feature>
<feature type="topological domain" description="Cytoplasmic" evidence="4">
    <location>
        <begin position="165"/>
        <end position="186"/>
    </location>
</feature>
<feature type="coiled-coil region" evidence="3">
    <location>
        <begin position="31"/>
        <end position="91"/>
    </location>
</feature>
<comment type="function">
    <text evidence="2">Calcium-selective channel required to prevent calcium stores from overfilling. Component of the multi-pass translocon (MPT) complex that mediates insertion of multi-pass membrane proteins into the lipid bilayer of membranes (By similarity).</text>
</comment>
<comment type="subunit">
    <text evidence="2">Homodimer and homotetramer. Component of the multi-pass translocon (MPT) complex.</text>
</comment>
<comment type="subcellular location">
    <subcellularLocation>
        <location evidence="2">Endoplasmic reticulum membrane</location>
        <topology evidence="2">Multi-pass membrane protein</topology>
    </subcellularLocation>
</comment>
<comment type="similarity">
    <text evidence="4">Belongs to the TMCO1 family.</text>
</comment>
<sequence length="186" mass="20965">MAALEVLFILFVSIASSLASEGVSWLLVYRTENYKRGKANIDRLQIQLDKLVDQESETSSLSKKGNKDKKIEKIEEQLKIANKELSFSKMKSMFAVAISMIALFSYLNRIFDGVVVCKLPFVPIGFLQGISHRTIAGDDYTDCSMTFIYAICSMFIRNNIQLILGTAPPKTKQANPWALPEEKKTR</sequence>
<protein>
    <recommendedName>
        <fullName evidence="2">Calcium load-activated calcium channel homolog</fullName>
        <shortName evidence="2">CLAC channel</shortName>
    </recommendedName>
</protein>
<reference key="1">
    <citation type="journal article" date="2005" name="Nature">
        <title>The genome of the social amoeba Dictyostelium discoideum.</title>
        <authorList>
            <person name="Eichinger L."/>
            <person name="Pachebat J.A."/>
            <person name="Gloeckner G."/>
            <person name="Rajandream M.A."/>
            <person name="Sucgang R."/>
            <person name="Berriman M."/>
            <person name="Song J."/>
            <person name="Olsen R."/>
            <person name="Szafranski K."/>
            <person name="Xu Q."/>
            <person name="Tunggal B."/>
            <person name="Kummerfeld S."/>
            <person name="Madera M."/>
            <person name="Konfortov B.A."/>
            <person name="Rivero F."/>
            <person name="Bankier A.T."/>
            <person name="Lehmann R."/>
            <person name="Hamlin N."/>
            <person name="Davies R."/>
            <person name="Gaudet P."/>
            <person name="Fey P."/>
            <person name="Pilcher K."/>
            <person name="Chen G."/>
            <person name="Saunders D."/>
            <person name="Sodergren E.J."/>
            <person name="Davis P."/>
            <person name="Kerhornou A."/>
            <person name="Nie X."/>
            <person name="Hall N."/>
            <person name="Anjard C."/>
            <person name="Hemphill L."/>
            <person name="Bason N."/>
            <person name="Farbrother P."/>
            <person name="Desany B."/>
            <person name="Just E."/>
            <person name="Morio T."/>
            <person name="Rost R."/>
            <person name="Churcher C.M."/>
            <person name="Cooper J."/>
            <person name="Haydock S."/>
            <person name="van Driessche N."/>
            <person name="Cronin A."/>
            <person name="Goodhead I."/>
            <person name="Muzny D.M."/>
            <person name="Mourier T."/>
            <person name="Pain A."/>
            <person name="Lu M."/>
            <person name="Harper D."/>
            <person name="Lindsay R."/>
            <person name="Hauser H."/>
            <person name="James K.D."/>
            <person name="Quiles M."/>
            <person name="Madan Babu M."/>
            <person name="Saito T."/>
            <person name="Buchrieser C."/>
            <person name="Wardroper A."/>
            <person name="Felder M."/>
            <person name="Thangavelu M."/>
            <person name="Johnson D."/>
            <person name="Knights A."/>
            <person name="Loulseged H."/>
            <person name="Mungall K.L."/>
            <person name="Oliver K."/>
            <person name="Price C."/>
            <person name="Quail M.A."/>
            <person name="Urushihara H."/>
            <person name="Hernandez J."/>
            <person name="Rabbinowitsch E."/>
            <person name="Steffen D."/>
            <person name="Sanders M."/>
            <person name="Ma J."/>
            <person name="Kohara Y."/>
            <person name="Sharp S."/>
            <person name="Simmonds M.N."/>
            <person name="Spiegler S."/>
            <person name="Tivey A."/>
            <person name="Sugano S."/>
            <person name="White B."/>
            <person name="Walker D."/>
            <person name="Woodward J.R."/>
            <person name="Winckler T."/>
            <person name="Tanaka Y."/>
            <person name="Shaulsky G."/>
            <person name="Schleicher M."/>
            <person name="Weinstock G.M."/>
            <person name="Rosenthal A."/>
            <person name="Cox E.C."/>
            <person name="Chisholm R.L."/>
            <person name="Gibbs R.A."/>
            <person name="Loomis W.F."/>
            <person name="Platzer M."/>
            <person name="Kay R.R."/>
            <person name="Williams J.G."/>
            <person name="Dear P.H."/>
            <person name="Noegel A.A."/>
            <person name="Barrell B.G."/>
            <person name="Kuspa A."/>
        </authorList>
    </citation>
    <scope>NUCLEOTIDE SEQUENCE [LARGE SCALE GENOMIC DNA]</scope>
    <source>
        <strain>AX4</strain>
    </source>
</reference>
<proteinExistence type="evidence at transcript level"/>
<keyword id="KW-0106">Calcium</keyword>
<keyword id="KW-0107">Calcium channel</keyword>
<keyword id="KW-0109">Calcium transport</keyword>
<keyword id="KW-0175">Coiled coil</keyword>
<keyword id="KW-0256">Endoplasmic reticulum</keyword>
<keyword id="KW-0407">Ion channel</keyword>
<keyword id="KW-0406">Ion transport</keyword>
<keyword id="KW-0472">Membrane</keyword>
<keyword id="KW-1185">Reference proteome</keyword>
<keyword id="KW-0812">Transmembrane</keyword>
<keyword id="KW-1133">Transmembrane helix</keyword>
<keyword id="KW-0813">Transport</keyword>
<accession>Q54TU8</accession>
<dbReference type="EMBL" id="AAFI02000041">
    <property type="protein sequence ID" value="EAL66726.1"/>
    <property type="molecule type" value="Genomic_DNA"/>
</dbReference>
<dbReference type="RefSeq" id="XP_640713.1">
    <property type="nucleotide sequence ID" value="XM_635621.1"/>
</dbReference>
<dbReference type="SMR" id="Q54TU8"/>
<dbReference type="FunCoup" id="Q54TU8">
    <property type="interactions" value="298"/>
</dbReference>
<dbReference type="STRING" id="44689.Q54TU8"/>
<dbReference type="TCDB" id="1.A.106.1.11">
    <property type="family name" value="the calcium load-activated calcium channel (clac) family"/>
</dbReference>
<dbReference type="PaxDb" id="44689-DDB0205621"/>
<dbReference type="EnsemblProtists" id="EAL66726">
    <property type="protein sequence ID" value="EAL66726"/>
    <property type="gene ID" value="DDB_G0281489"/>
</dbReference>
<dbReference type="GeneID" id="8623100"/>
<dbReference type="KEGG" id="ddi:DDB_G0281489"/>
<dbReference type="dictyBase" id="DDB_G0281489"/>
<dbReference type="VEuPathDB" id="AmoebaDB:DDB_G0281489"/>
<dbReference type="eggNOG" id="KOG3312">
    <property type="taxonomic scope" value="Eukaryota"/>
</dbReference>
<dbReference type="HOGENOM" id="CLU_081121_0_0_1"/>
<dbReference type="InParanoid" id="Q54TU8"/>
<dbReference type="OMA" id="GMFGDFK"/>
<dbReference type="PhylomeDB" id="Q54TU8"/>
<dbReference type="PRO" id="PR:Q54TU8"/>
<dbReference type="Proteomes" id="UP000002195">
    <property type="component" value="Chromosome 3"/>
</dbReference>
<dbReference type="GO" id="GO:0005737">
    <property type="term" value="C:cytoplasm"/>
    <property type="evidence" value="ECO:0000318"/>
    <property type="project" value="GO_Central"/>
</dbReference>
<dbReference type="GO" id="GO:0005783">
    <property type="term" value="C:endoplasmic reticulum"/>
    <property type="evidence" value="ECO:0000318"/>
    <property type="project" value="GO_Central"/>
</dbReference>
<dbReference type="GO" id="GO:0005789">
    <property type="term" value="C:endoplasmic reticulum membrane"/>
    <property type="evidence" value="ECO:0007669"/>
    <property type="project" value="UniProtKB-SubCell"/>
</dbReference>
<dbReference type="GO" id="GO:0005262">
    <property type="term" value="F:calcium channel activity"/>
    <property type="evidence" value="ECO:0000318"/>
    <property type="project" value="GO_Central"/>
</dbReference>
<dbReference type="GO" id="GO:0032469">
    <property type="term" value="P:endoplasmic reticulum calcium ion homeostasis"/>
    <property type="evidence" value="ECO:0000318"/>
    <property type="project" value="GO_Central"/>
</dbReference>
<dbReference type="InterPro" id="IPR002809">
    <property type="entry name" value="EMC3/TMCO1"/>
</dbReference>
<dbReference type="InterPro" id="IPR008559">
    <property type="entry name" value="TMCO1"/>
</dbReference>
<dbReference type="PANTHER" id="PTHR20917:SF0">
    <property type="entry name" value="CALCIUM LOAD-ACTIVATED CALCIUM CHANNEL"/>
    <property type="match status" value="1"/>
</dbReference>
<dbReference type="PANTHER" id="PTHR20917">
    <property type="entry name" value="PNAS-RELATED"/>
    <property type="match status" value="1"/>
</dbReference>
<dbReference type="Pfam" id="PF01956">
    <property type="entry name" value="EMC3_TMCO1"/>
    <property type="match status" value="1"/>
</dbReference>
<dbReference type="PIRSF" id="PIRSF023322">
    <property type="entry name" value="DUF841_euk"/>
    <property type="match status" value="1"/>
</dbReference>
<dbReference type="SMART" id="SM01415">
    <property type="entry name" value="DUF106"/>
    <property type="match status" value="1"/>
</dbReference>